<name>NINAC_DROME</name>
<proteinExistence type="evidence at protein level"/>
<gene>
    <name type="primary">ninaC</name>
    <name type="ORF">CG5125</name>
</gene>
<organism>
    <name type="scientific">Drosophila melanogaster</name>
    <name type="common">Fruit fly</name>
    <dbReference type="NCBI Taxonomy" id="7227"/>
    <lineage>
        <taxon>Eukaryota</taxon>
        <taxon>Metazoa</taxon>
        <taxon>Ecdysozoa</taxon>
        <taxon>Arthropoda</taxon>
        <taxon>Hexapoda</taxon>
        <taxon>Insecta</taxon>
        <taxon>Pterygota</taxon>
        <taxon>Neoptera</taxon>
        <taxon>Endopterygota</taxon>
        <taxon>Diptera</taxon>
        <taxon>Brachycera</taxon>
        <taxon>Muscomorpha</taxon>
        <taxon>Ephydroidea</taxon>
        <taxon>Drosophilidae</taxon>
        <taxon>Drosophila</taxon>
        <taxon>Sophophora</taxon>
    </lineage>
</organism>
<keyword id="KW-0009">Actin-binding</keyword>
<keyword id="KW-0025">Alternative splicing</keyword>
<keyword id="KW-0067">ATP-binding</keyword>
<keyword id="KW-1003">Cell membrane</keyword>
<keyword id="KW-0966">Cell projection</keyword>
<keyword id="KW-0963">Cytoplasm</keyword>
<keyword id="KW-0206">Cytoskeleton</keyword>
<keyword id="KW-0418">Kinase</keyword>
<keyword id="KW-0472">Membrane</keyword>
<keyword id="KW-0505">Motor protein</keyword>
<keyword id="KW-0518">Myosin</keyword>
<keyword id="KW-0547">Nucleotide-binding</keyword>
<keyword id="KW-0539">Nucleus</keyword>
<keyword id="KW-0597">Phosphoprotein</keyword>
<keyword id="KW-1185">Reference proteome</keyword>
<keyword id="KW-0677">Repeat</keyword>
<keyword id="KW-0716">Sensory transduction</keyword>
<keyword id="KW-0723">Serine/threonine-protein kinase</keyword>
<keyword id="KW-0808">Transferase</keyword>
<keyword id="KW-0844">Vision</keyword>
<feature type="chain" id="PRO_0000086444" description="Neither inactivation nor afterpotential protein C">
    <location>
        <begin position="1"/>
        <end position="1501"/>
    </location>
</feature>
<feature type="domain" description="Protein kinase" evidence="3">
    <location>
        <begin position="16"/>
        <end position="282"/>
    </location>
</feature>
<feature type="domain" description="Myosin motor" evidence="4">
    <location>
        <begin position="332"/>
        <end position="1037"/>
    </location>
</feature>
<feature type="domain" description="IQ 1" evidence="2">
    <location>
        <begin position="1036"/>
        <end position="1065"/>
    </location>
</feature>
<feature type="domain" description="IQ 2" evidence="2">
    <location>
        <begin position="1072"/>
        <end position="1101"/>
    </location>
</feature>
<feature type="region of interest" description="Actin-binding" evidence="1">
    <location>
        <begin position="913"/>
        <end position="934"/>
    </location>
</feature>
<feature type="region of interest" description="Interaction with rtp" evidence="11">
    <location>
        <begin position="1043"/>
        <end position="1271"/>
    </location>
</feature>
<feature type="region of interest" description="Non alpha-helical, C-terminal domain">
    <location>
        <begin position="1066"/>
        <end position="1501"/>
    </location>
</feature>
<feature type="region of interest" description="Disordered" evidence="6">
    <location>
        <begin position="1308"/>
        <end position="1364"/>
    </location>
</feature>
<feature type="region of interest" description="Disordered" evidence="6">
    <location>
        <begin position="1390"/>
        <end position="1473"/>
    </location>
</feature>
<feature type="compositionally biased region" description="Pro residues" evidence="6">
    <location>
        <begin position="1326"/>
        <end position="1335"/>
    </location>
</feature>
<feature type="compositionally biased region" description="Low complexity" evidence="6">
    <location>
        <begin position="1336"/>
        <end position="1358"/>
    </location>
</feature>
<feature type="compositionally biased region" description="Basic and acidic residues" evidence="6">
    <location>
        <begin position="1405"/>
        <end position="1414"/>
    </location>
</feature>
<feature type="compositionally biased region" description="Polar residues" evidence="6">
    <location>
        <begin position="1449"/>
        <end position="1463"/>
    </location>
</feature>
<feature type="active site" description="Proton acceptor" evidence="3 5">
    <location>
        <position position="145"/>
    </location>
</feature>
<feature type="binding site" evidence="3">
    <location>
        <begin position="22"/>
        <end position="30"/>
    </location>
    <ligand>
        <name>ATP</name>
        <dbReference type="ChEBI" id="CHEBI:30616"/>
    </ligand>
</feature>
<feature type="binding site" evidence="3">
    <location>
        <position position="45"/>
    </location>
    <ligand>
        <name>ATP</name>
        <dbReference type="ChEBI" id="CHEBI:30616"/>
    </ligand>
</feature>
<feature type="modified residue" description="Phosphoserine" evidence="7">
    <location>
        <position position="183"/>
    </location>
</feature>
<feature type="splice variant" id="VSP_004940" description="In isoform A." evidence="12">
    <original>AFRGFRDRVRLPPLVNEKSGQLNENTADFIRPFAKKWREKSIFQVLLHYRAARF</original>
    <variation>GKKTQVDRLREYDEEHIDISETPSEAEEMFLEARMDEALAAVRIAKIEQASAEE</variation>
    <location>
        <begin position="1082"/>
        <end position="1135"/>
    </location>
</feature>
<feature type="splice variant" id="VSP_004941" description="In isoform A." evidence="12">
    <location>
        <begin position="1136"/>
        <end position="1501"/>
    </location>
</feature>
<feature type="sequence conflict" description="In Ref. 1; AAA28718/AAA28719." evidence="13" ref="1">
    <original>Q</original>
    <variation>K</variation>
    <location>
        <position position="253"/>
    </location>
</feature>
<feature type="sequence conflict" description="In Ref. 4; AAM50150." evidence="13" ref="4">
    <original>E</original>
    <variation>D</variation>
    <location>
        <position position="426"/>
    </location>
</feature>
<feature type="sequence conflict" description="In Ref. 1; AAA28718/AAA28719/AAA28721/AAA28720." evidence="13" ref="1">
    <original>D</original>
    <variation>N</variation>
    <location>
        <position position="791"/>
    </location>
</feature>
<feature type="sequence conflict" description="In Ref. 4; AAM50150." evidence="13" ref="4">
    <original>A</original>
    <variation>P</variation>
    <location>
        <position position="986"/>
    </location>
</feature>
<feature type="sequence conflict" description="In Ref. 1; AAA28718." evidence="13" ref="1">
    <original>R</original>
    <variation>P</variation>
    <location>
        <position position="1089"/>
    </location>
</feature>
<feature type="sequence conflict" description="In Ref. 1; AAA28718/AAA28721." evidence="13" ref="1">
    <original>V</original>
    <variation>E</variation>
    <location>
        <position position="1311"/>
    </location>
</feature>
<evidence type="ECO:0000250" key="1"/>
<evidence type="ECO:0000255" key="2">
    <source>
        <dbReference type="PROSITE-ProRule" id="PRU00116"/>
    </source>
</evidence>
<evidence type="ECO:0000255" key="3">
    <source>
        <dbReference type="PROSITE-ProRule" id="PRU00159"/>
    </source>
</evidence>
<evidence type="ECO:0000255" key="4">
    <source>
        <dbReference type="PROSITE-ProRule" id="PRU00782"/>
    </source>
</evidence>
<evidence type="ECO:0000255" key="5">
    <source>
        <dbReference type="PROSITE-ProRule" id="PRU10028"/>
    </source>
</evidence>
<evidence type="ECO:0000256" key="6">
    <source>
        <dbReference type="SAM" id="MobiDB-lite"/>
    </source>
</evidence>
<evidence type="ECO:0000269" key="7">
    <source>
    </source>
</evidence>
<evidence type="ECO:0000269" key="8">
    <source>
    </source>
</evidence>
<evidence type="ECO:0000269" key="9">
    <source>
    </source>
</evidence>
<evidence type="ECO:0000269" key="10">
    <source>
    </source>
</evidence>
<evidence type="ECO:0000269" key="11">
    <source>
    </source>
</evidence>
<evidence type="ECO:0000303" key="12">
    <source>
    </source>
</evidence>
<evidence type="ECO:0000305" key="13"/>
<dbReference type="EC" id="2.7.11.1"/>
<dbReference type="EMBL" id="J03131">
    <property type="protein sequence ID" value="AAA28718.1"/>
    <property type="molecule type" value="Genomic_DNA"/>
</dbReference>
<dbReference type="EMBL" id="J03131">
    <property type="protein sequence ID" value="AAA28719.1"/>
    <property type="molecule type" value="Genomic_DNA"/>
</dbReference>
<dbReference type="EMBL" id="M20230">
    <property type="protein sequence ID" value="AAA28721.1"/>
    <property type="molecule type" value="mRNA"/>
</dbReference>
<dbReference type="EMBL" id="M20231">
    <property type="protein sequence ID" value="AAA28720.1"/>
    <property type="molecule type" value="mRNA"/>
</dbReference>
<dbReference type="EMBL" id="AE014134">
    <property type="protein sequence ID" value="AAF52504.3"/>
    <property type="molecule type" value="Genomic_DNA"/>
</dbReference>
<dbReference type="EMBL" id="AE014134">
    <property type="protein sequence ID" value="AAF52505.1"/>
    <property type="molecule type" value="Genomic_DNA"/>
</dbReference>
<dbReference type="EMBL" id="AY119496">
    <property type="protein sequence ID" value="AAM50150.1"/>
    <property type="molecule type" value="mRNA"/>
</dbReference>
<dbReference type="PIR" id="A29813">
    <property type="entry name" value="A29813"/>
</dbReference>
<dbReference type="PIR" id="B29813">
    <property type="entry name" value="B29813"/>
</dbReference>
<dbReference type="RefSeq" id="NP_001260189.1">
    <molecule id="P10676-2"/>
    <property type="nucleotide sequence ID" value="NM_001273260.1"/>
</dbReference>
<dbReference type="RefSeq" id="NP_001260190.1">
    <molecule id="P10676-2"/>
    <property type="nucleotide sequence ID" value="NM_001273261.1"/>
</dbReference>
<dbReference type="RefSeq" id="NP_523503.2">
    <molecule id="P10676-1"/>
    <property type="nucleotide sequence ID" value="NM_078779.3"/>
</dbReference>
<dbReference type="RefSeq" id="NP_723271.1">
    <molecule id="P10676-2"/>
    <property type="nucleotide sequence ID" value="NM_164747.1"/>
</dbReference>
<dbReference type="SMR" id="P10676"/>
<dbReference type="BioGRID" id="60158">
    <property type="interactions" value="6"/>
</dbReference>
<dbReference type="FunCoup" id="P10676">
    <property type="interactions" value="48"/>
</dbReference>
<dbReference type="IntAct" id="P10676">
    <property type="interactions" value="9"/>
</dbReference>
<dbReference type="MINT" id="P10676"/>
<dbReference type="STRING" id="7227.FBpp0079064"/>
<dbReference type="iPTMnet" id="P10676"/>
<dbReference type="PaxDb" id="7227-FBpp0079064"/>
<dbReference type="EnsemblMetazoa" id="FBtr0079436">
    <molecule id="P10676-1"/>
    <property type="protein sequence ID" value="FBpp0079064"/>
    <property type="gene ID" value="FBgn0002938"/>
</dbReference>
<dbReference type="EnsemblMetazoa" id="FBtr0079437">
    <molecule id="P10676-2"/>
    <property type="protein sequence ID" value="FBpp0079065"/>
    <property type="gene ID" value="FBgn0002938"/>
</dbReference>
<dbReference type="EnsemblMetazoa" id="FBtr0334835">
    <molecule id="P10676-2"/>
    <property type="protein sequence ID" value="FBpp0306863"/>
    <property type="gene ID" value="FBgn0002938"/>
</dbReference>
<dbReference type="EnsemblMetazoa" id="FBtr0334836">
    <molecule id="P10676-2"/>
    <property type="protein sequence ID" value="FBpp0306864"/>
    <property type="gene ID" value="FBgn0002938"/>
</dbReference>
<dbReference type="GeneID" id="34012"/>
<dbReference type="KEGG" id="dme:Dmel_CG5125"/>
<dbReference type="AGR" id="FB:FBgn0002938"/>
<dbReference type="CTD" id="34012"/>
<dbReference type="FlyBase" id="FBgn0002938">
    <property type="gene designation" value="ninaC"/>
</dbReference>
<dbReference type="VEuPathDB" id="VectorBase:FBgn0002938"/>
<dbReference type="eggNOG" id="KOG0587">
    <property type="taxonomic scope" value="Eukaryota"/>
</dbReference>
<dbReference type="eggNOG" id="KOG4229">
    <property type="taxonomic scope" value="Eukaryota"/>
</dbReference>
<dbReference type="InParanoid" id="P10676"/>
<dbReference type="OMA" id="SGGTHFV"/>
<dbReference type="OrthoDB" id="6108017at2759"/>
<dbReference type="PhylomeDB" id="P10676"/>
<dbReference type="SignaLink" id="P10676"/>
<dbReference type="BioGRID-ORCS" id="34012">
    <property type="hits" value="0 hits in 3 CRISPR screens"/>
</dbReference>
<dbReference type="ChiTaRS" id="ninaC">
    <property type="organism name" value="fly"/>
</dbReference>
<dbReference type="GenomeRNAi" id="34012"/>
<dbReference type="PRO" id="PR:P10676"/>
<dbReference type="Proteomes" id="UP000000803">
    <property type="component" value="Chromosome 2L"/>
</dbReference>
<dbReference type="Bgee" id="FBgn0002938">
    <property type="expression patterns" value="Expressed in outer photoreceptor cell (Drosophila) in insect head and 62 other cell types or tissues"/>
</dbReference>
<dbReference type="ExpressionAtlas" id="P10676">
    <property type="expression patterns" value="baseline and differential"/>
</dbReference>
<dbReference type="GO" id="GO:0005737">
    <property type="term" value="C:cytoplasm"/>
    <property type="evidence" value="ECO:0000314"/>
    <property type="project" value="UniProtKB"/>
</dbReference>
<dbReference type="GO" id="GO:0016027">
    <property type="term" value="C:inaD signaling complex"/>
    <property type="evidence" value="ECO:0000353"/>
    <property type="project" value="FlyBase"/>
</dbReference>
<dbReference type="GO" id="GO:0042385">
    <property type="term" value="C:myosin III complex"/>
    <property type="evidence" value="ECO:0000303"/>
    <property type="project" value="FlyBase"/>
</dbReference>
<dbReference type="GO" id="GO:0005634">
    <property type="term" value="C:nucleus"/>
    <property type="evidence" value="ECO:0000314"/>
    <property type="project" value="UniProtKB"/>
</dbReference>
<dbReference type="GO" id="GO:0016028">
    <property type="term" value="C:rhabdomere"/>
    <property type="evidence" value="ECO:0000314"/>
    <property type="project" value="FlyBase"/>
</dbReference>
<dbReference type="GO" id="GO:0033583">
    <property type="term" value="C:rhabdomere membrane"/>
    <property type="evidence" value="ECO:0000314"/>
    <property type="project" value="UniProtKB"/>
</dbReference>
<dbReference type="GO" id="GO:0003779">
    <property type="term" value="F:actin binding"/>
    <property type="evidence" value="ECO:0007669"/>
    <property type="project" value="UniProtKB-KW"/>
</dbReference>
<dbReference type="GO" id="GO:0005524">
    <property type="term" value="F:ATP binding"/>
    <property type="evidence" value="ECO:0007669"/>
    <property type="project" value="UniProtKB-KW"/>
</dbReference>
<dbReference type="GO" id="GO:0005516">
    <property type="term" value="F:calmodulin binding"/>
    <property type="evidence" value="ECO:0000315"/>
    <property type="project" value="FlyBase"/>
</dbReference>
<dbReference type="GO" id="GO:0000146">
    <property type="term" value="F:microfilament motor activity"/>
    <property type="evidence" value="ECO:0000250"/>
    <property type="project" value="FlyBase"/>
</dbReference>
<dbReference type="GO" id="GO:0035091">
    <property type="term" value="F:phosphatidylinositol binding"/>
    <property type="evidence" value="ECO:0000314"/>
    <property type="project" value="FlyBase"/>
</dbReference>
<dbReference type="GO" id="GO:0106310">
    <property type="term" value="F:protein serine kinase activity"/>
    <property type="evidence" value="ECO:0007669"/>
    <property type="project" value="RHEA"/>
</dbReference>
<dbReference type="GO" id="GO:0004674">
    <property type="term" value="F:protein serine/threonine kinase activity"/>
    <property type="evidence" value="ECO:0000314"/>
    <property type="project" value="FlyBase"/>
</dbReference>
<dbReference type="GO" id="GO:0007010">
    <property type="term" value="P:cytoskeleton organization"/>
    <property type="evidence" value="ECO:0000315"/>
    <property type="project" value="FlyBase"/>
</dbReference>
<dbReference type="GO" id="GO:0006886">
    <property type="term" value="P:intracellular protein transport"/>
    <property type="evidence" value="ECO:0000315"/>
    <property type="project" value="FlyBase"/>
</dbReference>
<dbReference type="GO" id="GO:0016059">
    <property type="term" value="P:negative regulation of opsin-mediated signaling pathway"/>
    <property type="evidence" value="ECO:0000315"/>
    <property type="project" value="FlyBase"/>
</dbReference>
<dbReference type="GO" id="GO:0045494">
    <property type="term" value="P:photoreceptor cell maintenance"/>
    <property type="evidence" value="ECO:0000315"/>
    <property type="project" value="FlyBase"/>
</dbReference>
<dbReference type="GO" id="GO:0007602">
    <property type="term" value="P:phototransduction"/>
    <property type="evidence" value="ECO:0000315"/>
    <property type="project" value="UniProtKB"/>
</dbReference>
<dbReference type="GO" id="GO:0007604">
    <property type="term" value="P:phototransduction, UV"/>
    <property type="evidence" value="ECO:0000315"/>
    <property type="project" value="FlyBase"/>
</dbReference>
<dbReference type="GO" id="GO:0007603">
    <property type="term" value="P:phototransduction, visible light"/>
    <property type="evidence" value="ECO:0000315"/>
    <property type="project" value="FlyBase"/>
</dbReference>
<dbReference type="GO" id="GO:0008104">
    <property type="term" value="P:protein localization"/>
    <property type="evidence" value="ECO:0000315"/>
    <property type="project" value="FlyBase"/>
</dbReference>
<dbReference type="GO" id="GO:1990146">
    <property type="term" value="P:protein localization to rhabdomere"/>
    <property type="evidence" value="ECO:0000315"/>
    <property type="project" value="FlyBase"/>
</dbReference>
<dbReference type="GO" id="GO:0030832">
    <property type="term" value="P:regulation of actin filament length"/>
    <property type="evidence" value="ECO:0000318"/>
    <property type="project" value="GO_Central"/>
</dbReference>
<dbReference type="GO" id="GO:0009416">
    <property type="term" value="P:response to light stimulus"/>
    <property type="evidence" value="ECO:0000315"/>
    <property type="project" value="FlyBase"/>
</dbReference>
<dbReference type="GO" id="GO:0007601">
    <property type="term" value="P:visual perception"/>
    <property type="evidence" value="ECO:0007669"/>
    <property type="project" value="UniProtKB-KW"/>
</dbReference>
<dbReference type="CDD" id="cd14882">
    <property type="entry name" value="MYSc_Myo21"/>
    <property type="match status" value="1"/>
</dbReference>
<dbReference type="CDD" id="cd06608">
    <property type="entry name" value="STKc_myosinIII_N_like"/>
    <property type="match status" value="1"/>
</dbReference>
<dbReference type="FunFam" id="1.10.510.10:FF:000840">
    <property type="entry name" value="Uncharacterized protein, isoform A"/>
    <property type="match status" value="1"/>
</dbReference>
<dbReference type="Gene3D" id="1.10.10.820">
    <property type="match status" value="1"/>
</dbReference>
<dbReference type="Gene3D" id="1.20.5.190">
    <property type="match status" value="1"/>
</dbReference>
<dbReference type="Gene3D" id="1.20.58.530">
    <property type="match status" value="1"/>
</dbReference>
<dbReference type="Gene3D" id="6.20.240.20">
    <property type="match status" value="1"/>
</dbReference>
<dbReference type="Gene3D" id="3.40.850.10">
    <property type="entry name" value="Kinesin motor domain"/>
    <property type="match status" value="1"/>
</dbReference>
<dbReference type="Gene3D" id="1.20.120.720">
    <property type="entry name" value="Myosin VI head, motor domain, U50 subdomain"/>
    <property type="match status" value="1"/>
</dbReference>
<dbReference type="Gene3D" id="1.10.510.10">
    <property type="entry name" value="Transferase(Phosphotransferase) domain 1"/>
    <property type="match status" value="1"/>
</dbReference>
<dbReference type="InterPro" id="IPR000048">
    <property type="entry name" value="IQ_motif_EF-hand-BS"/>
</dbReference>
<dbReference type="InterPro" id="IPR011009">
    <property type="entry name" value="Kinase-like_dom_sf"/>
</dbReference>
<dbReference type="InterPro" id="IPR036961">
    <property type="entry name" value="Kinesin_motor_dom_sf"/>
</dbReference>
<dbReference type="InterPro" id="IPR052409">
    <property type="entry name" value="Myosin-III_kinase_activity"/>
</dbReference>
<dbReference type="InterPro" id="IPR001609">
    <property type="entry name" value="Myosin_head_motor_dom-like"/>
</dbReference>
<dbReference type="InterPro" id="IPR027417">
    <property type="entry name" value="P-loop_NTPase"/>
</dbReference>
<dbReference type="InterPro" id="IPR000719">
    <property type="entry name" value="Prot_kinase_dom"/>
</dbReference>
<dbReference type="InterPro" id="IPR008266">
    <property type="entry name" value="Tyr_kinase_AS"/>
</dbReference>
<dbReference type="InterPro" id="IPR020635">
    <property type="entry name" value="Tyr_kinase_cat_dom"/>
</dbReference>
<dbReference type="PANTHER" id="PTHR46256">
    <property type="entry name" value="AGAP011099-PA"/>
    <property type="match status" value="1"/>
</dbReference>
<dbReference type="PANTHER" id="PTHR46256:SF2">
    <property type="entry name" value="NEITHER INACTIVATION NOR AFTERPOTENTIAL PROTEIN C"/>
    <property type="match status" value="1"/>
</dbReference>
<dbReference type="Pfam" id="PF00612">
    <property type="entry name" value="IQ"/>
    <property type="match status" value="2"/>
</dbReference>
<dbReference type="Pfam" id="PF00063">
    <property type="entry name" value="Myosin_head"/>
    <property type="match status" value="1"/>
</dbReference>
<dbReference type="Pfam" id="PF00069">
    <property type="entry name" value="Pkinase"/>
    <property type="match status" value="1"/>
</dbReference>
<dbReference type="PRINTS" id="PR00193">
    <property type="entry name" value="MYOSINHEAVY"/>
</dbReference>
<dbReference type="SMART" id="SM00015">
    <property type="entry name" value="IQ"/>
    <property type="match status" value="2"/>
</dbReference>
<dbReference type="SMART" id="SM00242">
    <property type="entry name" value="MYSc"/>
    <property type="match status" value="1"/>
</dbReference>
<dbReference type="SMART" id="SM00219">
    <property type="entry name" value="TyrKc"/>
    <property type="match status" value="1"/>
</dbReference>
<dbReference type="SUPFAM" id="SSF52540">
    <property type="entry name" value="P-loop containing nucleoside triphosphate hydrolases"/>
    <property type="match status" value="1"/>
</dbReference>
<dbReference type="SUPFAM" id="SSF56112">
    <property type="entry name" value="Protein kinase-like (PK-like)"/>
    <property type="match status" value="1"/>
</dbReference>
<dbReference type="PROSITE" id="PS50096">
    <property type="entry name" value="IQ"/>
    <property type="match status" value="2"/>
</dbReference>
<dbReference type="PROSITE" id="PS51456">
    <property type="entry name" value="MYOSIN_MOTOR"/>
    <property type="match status" value="1"/>
</dbReference>
<dbReference type="PROSITE" id="PS50011">
    <property type="entry name" value="PROTEIN_KINASE_DOM"/>
    <property type="match status" value="1"/>
</dbReference>
<dbReference type="PROSITE" id="PS00109">
    <property type="entry name" value="PROTEIN_KINASE_TYR"/>
    <property type="match status" value="1"/>
</dbReference>
<accession>P10676</accession>
<accession>P10677</accession>
<accession>Q8MRP1</accession>
<accession>Q9VM23</accession>
<accession>Q9VM24</accession>
<reference key="1">
    <citation type="journal article" date="1988" name="Cell">
        <title>The Drosophila ninaC locus encodes two photoreceptor cell specific proteins with domains homologous to protein kinases and the myosin heavy chain head.</title>
        <authorList>
            <person name="Montell C."/>
            <person name="Rubin G.M."/>
        </authorList>
    </citation>
    <scope>NUCLEOTIDE SEQUENCE [GENOMIC DNA / MRNA] (ISOFORMS A AND B)</scope>
    <scope>FUNCTION</scope>
</reference>
<reference key="2">
    <citation type="journal article" date="2000" name="Science">
        <title>The genome sequence of Drosophila melanogaster.</title>
        <authorList>
            <person name="Adams M.D."/>
            <person name="Celniker S.E."/>
            <person name="Holt R.A."/>
            <person name="Evans C.A."/>
            <person name="Gocayne J.D."/>
            <person name="Amanatides P.G."/>
            <person name="Scherer S.E."/>
            <person name="Li P.W."/>
            <person name="Hoskins R.A."/>
            <person name="Galle R.F."/>
            <person name="George R.A."/>
            <person name="Lewis S.E."/>
            <person name="Richards S."/>
            <person name="Ashburner M."/>
            <person name="Henderson S.N."/>
            <person name="Sutton G.G."/>
            <person name="Wortman J.R."/>
            <person name="Yandell M.D."/>
            <person name="Zhang Q."/>
            <person name="Chen L.X."/>
            <person name="Brandon R.C."/>
            <person name="Rogers Y.-H.C."/>
            <person name="Blazej R.G."/>
            <person name="Champe M."/>
            <person name="Pfeiffer B.D."/>
            <person name="Wan K.H."/>
            <person name="Doyle C."/>
            <person name="Baxter E.G."/>
            <person name="Helt G."/>
            <person name="Nelson C.R."/>
            <person name="Miklos G.L.G."/>
            <person name="Abril J.F."/>
            <person name="Agbayani A."/>
            <person name="An H.-J."/>
            <person name="Andrews-Pfannkoch C."/>
            <person name="Baldwin D."/>
            <person name="Ballew R.M."/>
            <person name="Basu A."/>
            <person name="Baxendale J."/>
            <person name="Bayraktaroglu L."/>
            <person name="Beasley E.M."/>
            <person name="Beeson K.Y."/>
            <person name="Benos P.V."/>
            <person name="Berman B.P."/>
            <person name="Bhandari D."/>
            <person name="Bolshakov S."/>
            <person name="Borkova D."/>
            <person name="Botchan M.R."/>
            <person name="Bouck J."/>
            <person name="Brokstein P."/>
            <person name="Brottier P."/>
            <person name="Burtis K.C."/>
            <person name="Busam D.A."/>
            <person name="Butler H."/>
            <person name="Cadieu E."/>
            <person name="Center A."/>
            <person name="Chandra I."/>
            <person name="Cherry J.M."/>
            <person name="Cawley S."/>
            <person name="Dahlke C."/>
            <person name="Davenport L.B."/>
            <person name="Davies P."/>
            <person name="de Pablos B."/>
            <person name="Delcher A."/>
            <person name="Deng Z."/>
            <person name="Mays A.D."/>
            <person name="Dew I."/>
            <person name="Dietz S.M."/>
            <person name="Dodson K."/>
            <person name="Doup L.E."/>
            <person name="Downes M."/>
            <person name="Dugan-Rocha S."/>
            <person name="Dunkov B.C."/>
            <person name="Dunn P."/>
            <person name="Durbin K.J."/>
            <person name="Evangelista C.C."/>
            <person name="Ferraz C."/>
            <person name="Ferriera S."/>
            <person name="Fleischmann W."/>
            <person name="Fosler C."/>
            <person name="Gabrielian A.E."/>
            <person name="Garg N.S."/>
            <person name="Gelbart W.M."/>
            <person name="Glasser K."/>
            <person name="Glodek A."/>
            <person name="Gong F."/>
            <person name="Gorrell J.H."/>
            <person name="Gu Z."/>
            <person name="Guan P."/>
            <person name="Harris M."/>
            <person name="Harris N.L."/>
            <person name="Harvey D.A."/>
            <person name="Heiman T.J."/>
            <person name="Hernandez J.R."/>
            <person name="Houck J."/>
            <person name="Hostin D."/>
            <person name="Houston K.A."/>
            <person name="Howland T.J."/>
            <person name="Wei M.-H."/>
            <person name="Ibegwam C."/>
            <person name="Jalali M."/>
            <person name="Kalush F."/>
            <person name="Karpen G.H."/>
            <person name="Ke Z."/>
            <person name="Kennison J.A."/>
            <person name="Ketchum K.A."/>
            <person name="Kimmel B.E."/>
            <person name="Kodira C.D."/>
            <person name="Kraft C.L."/>
            <person name="Kravitz S."/>
            <person name="Kulp D."/>
            <person name="Lai Z."/>
            <person name="Lasko P."/>
            <person name="Lei Y."/>
            <person name="Levitsky A.A."/>
            <person name="Li J.H."/>
            <person name="Li Z."/>
            <person name="Liang Y."/>
            <person name="Lin X."/>
            <person name="Liu X."/>
            <person name="Mattei B."/>
            <person name="McIntosh T.C."/>
            <person name="McLeod M.P."/>
            <person name="McPherson D."/>
            <person name="Merkulov G."/>
            <person name="Milshina N.V."/>
            <person name="Mobarry C."/>
            <person name="Morris J."/>
            <person name="Moshrefi A."/>
            <person name="Mount S.M."/>
            <person name="Moy M."/>
            <person name="Murphy B."/>
            <person name="Murphy L."/>
            <person name="Muzny D.M."/>
            <person name="Nelson D.L."/>
            <person name="Nelson D.R."/>
            <person name="Nelson K.A."/>
            <person name="Nixon K."/>
            <person name="Nusskern D.R."/>
            <person name="Pacleb J.M."/>
            <person name="Palazzolo M."/>
            <person name="Pittman G.S."/>
            <person name="Pan S."/>
            <person name="Pollard J."/>
            <person name="Puri V."/>
            <person name="Reese M.G."/>
            <person name="Reinert K."/>
            <person name="Remington K."/>
            <person name="Saunders R.D.C."/>
            <person name="Scheeler F."/>
            <person name="Shen H."/>
            <person name="Shue B.C."/>
            <person name="Siden-Kiamos I."/>
            <person name="Simpson M."/>
            <person name="Skupski M.P."/>
            <person name="Smith T.J."/>
            <person name="Spier E."/>
            <person name="Spradling A.C."/>
            <person name="Stapleton M."/>
            <person name="Strong R."/>
            <person name="Sun E."/>
            <person name="Svirskas R."/>
            <person name="Tector C."/>
            <person name="Turner R."/>
            <person name="Venter E."/>
            <person name="Wang A.H."/>
            <person name="Wang X."/>
            <person name="Wang Z.-Y."/>
            <person name="Wassarman D.A."/>
            <person name="Weinstock G.M."/>
            <person name="Weissenbach J."/>
            <person name="Williams S.M."/>
            <person name="Woodage T."/>
            <person name="Worley K.C."/>
            <person name="Wu D."/>
            <person name="Yang S."/>
            <person name="Yao Q.A."/>
            <person name="Ye J."/>
            <person name="Yeh R.-F."/>
            <person name="Zaveri J.S."/>
            <person name="Zhan M."/>
            <person name="Zhang G."/>
            <person name="Zhao Q."/>
            <person name="Zheng L."/>
            <person name="Zheng X.H."/>
            <person name="Zhong F.N."/>
            <person name="Zhong W."/>
            <person name="Zhou X."/>
            <person name="Zhu S.C."/>
            <person name="Zhu X."/>
            <person name="Smith H.O."/>
            <person name="Gibbs R.A."/>
            <person name="Myers E.W."/>
            <person name="Rubin G.M."/>
            <person name="Venter J.C."/>
        </authorList>
    </citation>
    <scope>NUCLEOTIDE SEQUENCE [LARGE SCALE GENOMIC DNA]</scope>
    <source>
        <strain>Berkeley</strain>
    </source>
</reference>
<reference key="3">
    <citation type="journal article" date="2002" name="Genome Biol.">
        <title>Annotation of the Drosophila melanogaster euchromatic genome: a systematic review.</title>
        <authorList>
            <person name="Misra S."/>
            <person name="Crosby M.A."/>
            <person name="Mungall C.J."/>
            <person name="Matthews B.B."/>
            <person name="Campbell K.S."/>
            <person name="Hradecky P."/>
            <person name="Huang Y."/>
            <person name="Kaminker J.S."/>
            <person name="Millburn G.H."/>
            <person name="Prochnik S.E."/>
            <person name="Smith C.D."/>
            <person name="Tupy J.L."/>
            <person name="Whitfield E.J."/>
            <person name="Bayraktaroglu L."/>
            <person name="Berman B.P."/>
            <person name="Bettencourt B.R."/>
            <person name="Celniker S.E."/>
            <person name="de Grey A.D.N.J."/>
            <person name="Drysdale R.A."/>
            <person name="Harris N.L."/>
            <person name="Richter J."/>
            <person name="Russo S."/>
            <person name="Schroeder A.J."/>
            <person name="Shu S.Q."/>
            <person name="Stapleton M."/>
            <person name="Yamada C."/>
            <person name="Ashburner M."/>
            <person name="Gelbart W.M."/>
            <person name="Rubin G.M."/>
            <person name="Lewis S.E."/>
        </authorList>
    </citation>
    <scope>GENOME REANNOTATION</scope>
    <scope>ALTERNATIVE SPLICING</scope>
    <source>
        <strain>Berkeley</strain>
    </source>
</reference>
<reference key="4">
    <citation type="journal article" date="2002" name="Genome Biol.">
        <title>A Drosophila full-length cDNA resource.</title>
        <authorList>
            <person name="Stapleton M."/>
            <person name="Carlson J.W."/>
            <person name="Brokstein P."/>
            <person name="Yu C."/>
            <person name="Champe M."/>
            <person name="George R.A."/>
            <person name="Guarin H."/>
            <person name="Kronmiller B."/>
            <person name="Pacleb J.M."/>
            <person name="Park S."/>
            <person name="Wan K.H."/>
            <person name="Rubin G.M."/>
            <person name="Celniker S.E."/>
        </authorList>
    </citation>
    <scope>NUCLEOTIDE SEQUENCE [LARGE SCALE MRNA] (ISOFORM B)</scope>
    <source>
        <strain>Berkeley</strain>
        <tissue>Head</tissue>
    </source>
</reference>
<reference key="5">
    <citation type="journal article" date="2008" name="J. Proteome Res.">
        <title>Phosphoproteome analysis of Drosophila melanogaster embryos.</title>
        <authorList>
            <person name="Zhai B."/>
            <person name="Villen J."/>
            <person name="Beausoleil S.A."/>
            <person name="Mintseris J."/>
            <person name="Gygi S.P."/>
        </authorList>
    </citation>
    <scope>PHOSPHORYLATION [LARGE SCALE ANALYSIS] AT SER-183</scope>
    <scope>IDENTIFICATION BY MASS SPECTROMETRY</scope>
    <source>
        <tissue>Embryo</tissue>
    </source>
</reference>
<reference key="6">
    <citation type="journal article" date="2010" name="J. Neurosci.">
        <title>Retinophilin is a light-regulated phosphoprotein required to suppress photoreceptor dark noise in Drosophila.</title>
        <authorList>
            <person name="Mecklenburg K.L."/>
            <person name="Takemori N."/>
            <person name="Komori N."/>
            <person name="Chu B."/>
            <person name="Hardie R.C."/>
            <person name="Matsumoto H."/>
            <person name="O'Tousa J.E."/>
        </authorList>
    </citation>
    <scope>FUNCTION</scope>
</reference>
<reference key="7">
    <citation type="journal article" date="2010" name="J. Neurosci.">
        <title>Dependence on a retinophilin/myosin complex for stability of PKC and INAD and termination of phototransduction.</title>
        <authorList>
            <person name="Venkatachalam K."/>
            <person name="Wasserman D."/>
            <person name="Wang X."/>
            <person name="Li R."/>
            <person name="Mills E."/>
            <person name="Elsaesser R."/>
            <person name="Li H.S."/>
            <person name="Montell C."/>
        </authorList>
    </citation>
    <scope>FUNCTION</scope>
    <scope>INTERACTION WITH RTP</scope>
</reference>
<reference key="8">
    <citation type="journal article" date="2015" name="PLoS ONE">
        <title>Invertebrate and vertebrate class III myosins interact with MORN repeat-containing adaptor proteins.</title>
        <authorList>
            <person name="Mecklenburg K.L."/>
            <person name="Freed S.A."/>
            <person name="Raval M."/>
            <person name="Quintero O.A."/>
            <person name="Yengo C.M."/>
            <person name="O'Tousa J.E."/>
        </authorList>
    </citation>
    <scope>INTERACTION WITH RTP</scope>
    <scope>SUBCELLULAR LOCATION</scope>
    <scope>TISSUE SPECIFICITY</scope>
</reference>
<comment type="function">
    <text evidence="8 9 10">Required for photoreceptor cell function. The ninaC proteins combines putative serine/threonine-protein kinase and myosin activities (PubMed:2449973). Essential for the expression and stability of the rtp protein in the photoreceptors (PubMed:20107052). The rtp/ninaC complex is required for stability of inad and inac and the normal termination of phototransduction in the retina (PubMed:20739554).</text>
</comment>
<comment type="catalytic activity">
    <reaction>
        <text>L-seryl-[protein] + ATP = O-phospho-L-seryl-[protein] + ADP + H(+)</text>
        <dbReference type="Rhea" id="RHEA:17989"/>
        <dbReference type="Rhea" id="RHEA-COMP:9863"/>
        <dbReference type="Rhea" id="RHEA-COMP:11604"/>
        <dbReference type="ChEBI" id="CHEBI:15378"/>
        <dbReference type="ChEBI" id="CHEBI:29999"/>
        <dbReference type="ChEBI" id="CHEBI:30616"/>
        <dbReference type="ChEBI" id="CHEBI:83421"/>
        <dbReference type="ChEBI" id="CHEBI:456216"/>
        <dbReference type="EC" id="2.7.11.1"/>
    </reaction>
</comment>
<comment type="catalytic activity">
    <reaction>
        <text>L-threonyl-[protein] + ATP = O-phospho-L-threonyl-[protein] + ADP + H(+)</text>
        <dbReference type="Rhea" id="RHEA:46608"/>
        <dbReference type="Rhea" id="RHEA-COMP:11060"/>
        <dbReference type="Rhea" id="RHEA-COMP:11605"/>
        <dbReference type="ChEBI" id="CHEBI:15378"/>
        <dbReference type="ChEBI" id="CHEBI:30013"/>
        <dbReference type="ChEBI" id="CHEBI:30616"/>
        <dbReference type="ChEBI" id="CHEBI:61977"/>
        <dbReference type="ChEBI" id="CHEBI:456216"/>
        <dbReference type="EC" id="2.7.11.1"/>
    </reaction>
</comment>
<comment type="subunit">
    <text evidence="11">Interacts with rtp.</text>
</comment>
<comment type="subcellular location">
    <subcellularLocation>
        <location evidence="11">Cytoplasm</location>
    </subcellularLocation>
    <subcellularLocation>
        <location>Cytoplasm</location>
        <location>Cytoskeleton</location>
    </subcellularLocation>
    <subcellularLocation>
        <location evidence="11">Nucleus</location>
    </subcellularLocation>
    <subcellularLocation>
        <location evidence="11">Membrane</location>
        <topology evidence="13">Peripheral membrane protein</topology>
    </subcellularLocation>
    <subcellularLocation>
        <location evidence="11">Cell projection</location>
        <location evidence="11">Rhabdomere membrane</location>
        <topology evidence="13">Peripheral membrane protein</topology>
    </subcellularLocation>
    <text evidence="11">Localizes in the cytoplasm or punctate structures within the nuclei in the absence of rtp. Co-localizes with rtp in the rhabdomere membrane.</text>
</comment>
<comment type="alternative products">
    <event type="alternative splicing"/>
    <isoform>
        <id>P10676-1</id>
        <name>B</name>
        <name>Long</name>
        <sequence type="displayed"/>
    </isoform>
    <isoform>
        <id>P10676-2</id>
        <name>A</name>
        <name>Short</name>
        <sequence type="described" ref="VSP_004940 VSP_004941"/>
    </isoform>
</comment>
<comment type="tissue specificity">
    <text evidence="11">Expressed in the phototransducing compartment of photoreceptor cells, the rhabdomeres (at protein level).</text>
</comment>
<comment type="similarity">
    <text evidence="13">In the C-terminal section; belongs to the TRAFAC class myosin-kinesin ATPase superfamily. Myosin family.</text>
</comment>
<comment type="similarity">
    <text evidence="13">In the N-terminal section; belongs to the protein kinase superfamily. Ser/Thr protein kinase family.</text>
</comment>
<protein>
    <recommendedName>
        <fullName>Neither inactivation nor afterpotential protein C</fullName>
        <ecNumber>2.7.11.1</ecNumber>
    </recommendedName>
</protein>
<sequence length="1501" mass="174300">MMYLPYAQLPDPTDKFEIYEEIAQGVNAKVFRAKELDNDRIVALKIQHYDEEHQVSIEEEYRTLRDYCDHPNLPEFYGVYKLSKPNGPDEIWFVMEYCAGGTAVDMVNKLLKLDRRMREEHIAYIIRETCRAAIELNRNHVLHRDIRGDNILLTKNGRVKLCDFGLSRQVDSTLGKRGTCIGSPCWMAPEVVSAMESREPDITVRADVWALGITTIELADGKPPFADMHPTRAMFQIIRNPPPTLMRPTNWSQQINDFISESLEKNAENRPMMVEMVEHPFLTELIENEDEMRSDIAEMLELSRDVKTLYKEPELFVDRGYVKRFDEKPEKMYPEDLAALENPVDENIIESLRHRILMGESYSFIGDILLSLNSNEIKQEFPQEFHAKYRFKSRSENQPHIFSVADIAYQDMLHHKEPQHIVLSGESYSGKSTNARLLIKHLCYLGDGNRGATGRVESSIKAILMLVNAGTPVNNDSTRCVLQYCLTFGKTGKMSGAVFNMYMLEKLRVATTDGTQHNFHIFYYFYDFINQQNQLKEYNLKADRNYRYLRVPPEVPPSKLKYRRDDPEGNVERYREFENILRDIDFNHKQLETVRKVLAAILNIGNIRFRQNGKYAEVENTDIVSRIAELLRVDEKKFMWSLTNFIMVKGGIAERRQYTTEEARDARDAVASTLYSRLVDFIINRINMNMSFPRAVFGDTNAIIIHDMFGFECFNRNGLEQLMINTLNEQMQYHYNQRIFISEMLEMEAEDIDTINLNFYDNKTALDNLLTKPDGLFYIIDDASRSCQDQDLIMDRVSEKHSQFVKKHTATEISVAHYTGRIIYDTRAFTDINRDFVPPEMIETFRSSLDESIMLMFTNQLTKAGNLTMPFEAVQHKDESERKSYALNTLSAGCISQVNNLRTLAANFRFTCLTLLKMLSQNANLGVHFVRCIRADLEYKPRSFHSDVVQQQMKALGVLDTVIARQKGFSSRLPFDEFLRRYQFLAFDFDEPVEMTKDNCRLLFLRLKMEGWALGKTKVFLRYYNDEFLARLYELQVKKVIKVQSMMRALLARKRVKGGKVFKLGKKGPEHHDVAASKIQKAFRGFRDRVRLPPLVNEKSGQLNENTADFIRPFAKKWREKSIFQVLLHYRAARFQDFVNLSQQVHIYNQRMVAGLNKCTRAVPFERINMREVNSSQLGPLPVPIKKMPFRLDQIPFYDTQYMVDPANSISRQAFPNQLLTQHMEDDEPWDSPLQRNPSMTSCALTYNAYKKEQACQTNWDRMGESDNIYNQGYFRDPQQLRRNQMQMNMNAYNNAYNSYNSNYNNQNWGVHRSGSRRNSLKGYAAPPPPPPPMPSSNYYRNNPNQQQRNYQQRSSYPPSDPVRELQNMARNEGDNSEDPPFNFKAMLRKTNYPRGSETNTYDFNNRRGSDSGDQHTFQPPKLRSTGRRYQDDEGYNSSSGNYGVSRKFGQQQRAPTLRQSPASVGRSFEDSNARSFEEAGSYVEEEIAPGITLSGYAVDI</sequence>